<keyword id="KW-0256">Endoplasmic reticulum</keyword>
<keyword id="KW-0472">Membrane</keyword>
<keyword id="KW-1185">Reference proteome</keyword>
<keyword id="KW-0732">Signal</keyword>
<keyword id="KW-0812">Transmembrane</keyword>
<keyword id="KW-1133">Transmembrane helix</keyword>
<dbReference type="EMBL" id="BC122910">
    <property type="protein sequence ID" value="AAI22911.1"/>
    <property type="molecule type" value="mRNA"/>
</dbReference>
<dbReference type="RefSeq" id="NP_001072567.1">
    <property type="nucleotide sequence ID" value="NM_001079099.1"/>
</dbReference>
<dbReference type="SMR" id="Q0IHY5"/>
<dbReference type="FunCoup" id="Q0IHY5">
    <property type="interactions" value="1997"/>
</dbReference>
<dbReference type="STRING" id="8364.ENSXETP00000035270"/>
<dbReference type="PaxDb" id="8364-ENSXETP00000024474"/>
<dbReference type="DNASU" id="780022"/>
<dbReference type="GeneID" id="780022"/>
<dbReference type="KEGG" id="xtr:780022"/>
<dbReference type="AGR" id="Xenbase:XB-GENE-945123"/>
<dbReference type="CTD" id="56851"/>
<dbReference type="Xenbase" id="XB-GENE-945123">
    <property type="gene designation" value="emc7"/>
</dbReference>
<dbReference type="eggNOG" id="KOG3306">
    <property type="taxonomic scope" value="Eukaryota"/>
</dbReference>
<dbReference type="HOGENOM" id="CLU_073620_1_2_1"/>
<dbReference type="InParanoid" id="Q0IHY5"/>
<dbReference type="OMA" id="EMENMQM"/>
<dbReference type="OrthoDB" id="27095at2759"/>
<dbReference type="Proteomes" id="UP000008143">
    <property type="component" value="Chromosome 8"/>
</dbReference>
<dbReference type="GO" id="GO:0072546">
    <property type="term" value="C:EMC complex"/>
    <property type="evidence" value="ECO:0000250"/>
    <property type="project" value="UniProtKB"/>
</dbReference>
<dbReference type="GO" id="GO:0005789">
    <property type="term" value="C:endoplasmic reticulum membrane"/>
    <property type="evidence" value="ECO:0000250"/>
    <property type="project" value="UniProtKB"/>
</dbReference>
<dbReference type="GO" id="GO:0016020">
    <property type="term" value="C:membrane"/>
    <property type="evidence" value="ECO:0000250"/>
    <property type="project" value="UniProtKB"/>
</dbReference>
<dbReference type="GO" id="GO:0045050">
    <property type="term" value="P:protein insertion into ER membrane by stop-transfer membrane-anchor sequence"/>
    <property type="evidence" value="ECO:0000250"/>
    <property type="project" value="UniProtKB"/>
</dbReference>
<dbReference type="GO" id="GO:0071816">
    <property type="term" value="P:tail-anchored membrane protein insertion into ER membrane"/>
    <property type="evidence" value="ECO:0000250"/>
    <property type="project" value="UniProtKB"/>
</dbReference>
<dbReference type="InterPro" id="IPR039163">
    <property type="entry name" value="EMC7"/>
</dbReference>
<dbReference type="InterPro" id="IPR019008">
    <property type="entry name" value="EMC7_beta_sandwich"/>
</dbReference>
<dbReference type="PANTHER" id="PTHR13605">
    <property type="entry name" value="ER MEMBRANE PROTEIN COMPLEX SUBUNIT 7"/>
    <property type="match status" value="1"/>
</dbReference>
<dbReference type="PANTHER" id="PTHR13605:SF4">
    <property type="entry name" value="ER MEMBRANE PROTEIN COMPLEX SUBUNIT 7"/>
    <property type="match status" value="1"/>
</dbReference>
<dbReference type="Pfam" id="PF09430">
    <property type="entry name" value="EMC7_beta-sandw"/>
    <property type="match status" value="1"/>
</dbReference>
<reference key="1">
    <citation type="submission" date="2006-09" db="EMBL/GenBank/DDBJ databases">
        <authorList>
            <consortium name="NIH - Xenopus Gene Collection (XGC) project"/>
        </authorList>
    </citation>
    <scope>NUCLEOTIDE SEQUENCE [LARGE SCALE MRNA]</scope>
    <source>
        <tissue>Brain</tissue>
    </source>
</reference>
<gene>
    <name type="primary">emc7</name>
</gene>
<feature type="signal peptide" evidence="2">
    <location>
        <begin position="1"/>
        <end position="28"/>
    </location>
</feature>
<feature type="chain" id="PRO_0000300095" description="Endoplasmic reticulum membrane protein complex subunit 7">
    <location>
        <begin position="29"/>
        <end position="237"/>
    </location>
</feature>
<feature type="topological domain" description="Lumenal" evidence="1">
    <location>
        <begin position="29"/>
        <end position="156"/>
    </location>
</feature>
<feature type="transmembrane region" description="Helical" evidence="2">
    <location>
        <begin position="157"/>
        <end position="177"/>
    </location>
</feature>
<feature type="topological domain" description="Cytoplasmic" evidence="1">
    <location>
        <begin position="178"/>
        <end position="237"/>
    </location>
</feature>
<feature type="region of interest" description="Disordered" evidence="3">
    <location>
        <begin position="216"/>
        <end position="237"/>
    </location>
</feature>
<feature type="compositionally biased region" description="Low complexity" evidence="3">
    <location>
        <begin position="217"/>
        <end position="237"/>
    </location>
</feature>
<organism>
    <name type="scientific">Xenopus tropicalis</name>
    <name type="common">Western clawed frog</name>
    <name type="synonym">Silurana tropicalis</name>
    <dbReference type="NCBI Taxonomy" id="8364"/>
    <lineage>
        <taxon>Eukaryota</taxon>
        <taxon>Metazoa</taxon>
        <taxon>Chordata</taxon>
        <taxon>Craniata</taxon>
        <taxon>Vertebrata</taxon>
        <taxon>Euteleostomi</taxon>
        <taxon>Amphibia</taxon>
        <taxon>Batrachia</taxon>
        <taxon>Anura</taxon>
        <taxon>Pipoidea</taxon>
        <taxon>Pipidae</taxon>
        <taxon>Xenopodinae</taxon>
        <taxon>Xenopus</taxon>
        <taxon>Silurana</taxon>
    </lineage>
</organism>
<comment type="function">
    <text evidence="1">Part of the endoplasmic reticulum membrane protein complex (EMC) that enables the energy-independent insertion into endoplasmic reticulum membranes of newly synthesized membrane proteins. Preferentially accommodates proteins with transmembrane domains that are weakly hydrophobic or contain destabilizing features such as charged and aromatic residues. Involved in the cotranslational insertion of multi-pass membrane proteins in which stop-transfer membrane-anchor sequences become ER membrane spanning helices. It is also required for the post-translational insertion of tail-anchored/TA proteins in endoplasmic reticulum membranes. By mediating the proper cotranslational insertion of N-terminal transmembrane domains in an N-exo topology, with translocated N-terminus in the lumen of the ER, controls the topology of multi-pass membrane proteins like the G protein-coupled receptors. By regulating the insertion of various proteins in membranes, it is indirectly involved in many cellular processes.</text>
</comment>
<comment type="subunit">
    <text evidence="1">Component of the ER membrane protein complex (EMC).</text>
</comment>
<comment type="subcellular location">
    <subcellularLocation>
        <location evidence="1">Endoplasmic reticulum membrane</location>
        <topology evidence="1">Single-pass type I membrane protein</topology>
    </subcellularLocation>
</comment>
<comment type="similarity">
    <text evidence="4">Belongs to the EMC7 family.</text>
</comment>
<name>EMC7_XENTR</name>
<evidence type="ECO:0000250" key="1">
    <source>
        <dbReference type="UniProtKB" id="Q9NPA0"/>
    </source>
</evidence>
<evidence type="ECO:0000255" key="2"/>
<evidence type="ECO:0000256" key="3">
    <source>
        <dbReference type="SAM" id="MobiDB-lite"/>
    </source>
</evidence>
<evidence type="ECO:0000305" key="4"/>
<proteinExistence type="evidence at transcript level"/>
<protein>
    <recommendedName>
        <fullName>Endoplasmic reticulum membrane protein complex subunit 7</fullName>
    </recommendedName>
    <alternativeName>
        <fullName>ER membrane protein complex subunit 7</fullName>
    </alternativeName>
</protein>
<accession>Q0IHY5</accession>
<sequence>MPAVALGVSVGWRSLSLWLLALLQLCSADLDVLSPGSGSDKFKVEGRAVVPGVRPQDWVNTARVLVDGEEHVGFLRTDGSFVVHDVPSGSYVVEVISPAHRFEPVRVDITSKGKMRARYVNHIKTSEVVRLPYPLQMKSSGPPSYFIKRETWGWTDFLMNPMVMMMVLPLLIFVLLPKVVNTSDPEMRREMEQSMNMLNTNPELPDVSEFMTRLFTSKSSSKSSGSGKAGKSVGKRR</sequence>